<organism>
    <name type="scientific">Bacillus cereus (strain ATCC 14579 / DSM 31 / CCUG 7414 / JCM 2152 / NBRC 15305 / NCIMB 9373 / NCTC 2599 / NRRL B-3711)</name>
    <dbReference type="NCBI Taxonomy" id="226900"/>
    <lineage>
        <taxon>Bacteria</taxon>
        <taxon>Bacillati</taxon>
        <taxon>Bacillota</taxon>
        <taxon>Bacilli</taxon>
        <taxon>Bacillales</taxon>
        <taxon>Bacillaceae</taxon>
        <taxon>Bacillus</taxon>
        <taxon>Bacillus cereus group</taxon>
    </lineage>
</organism>
<proteinExistence type="inferred from homology"/>
<reference key="1">
    <citation type="journal article" date="2003" name="Nature">
        <title>Genome sequence of Bacillus cereus and comparative analysis with Bacillus anthracis.</title>
        <authorList>
            <person name="Ivanova N."/>
            <person name="Sorokin A."/>
            <person name="Anderson I."/>
            <person name="Galleron N."/>
            <person name="Candelon B."/>
            <person name="Kapatral V."/>
            <person name="Bhattacharyya A."/>
            <person name="Reznik G."/>
            <person name="Mikhailova N."/>
            <person name="Lapidus A."/>
            <person name="Chu L."/>
            <person name="Mazur M."/>
            <person name="Goltsman E."/>
            <person name="Larsen N."/>
            <person name="D'Souza M."/>
            <person name="Walunas T."/>
            <person name="Grechkin Y."/>
            <person name="Pusch G."/>
            <person name="Haselkorn R."/>
            <person name="Fonstein M."/>
            <person name="Ehrlich S.D."/>
            <person name="Overbeek R."/>
            <person name="Kyrpides N.C."/>
        </authorList>
    </citation>
    <scope>NUCLEOTIDE SEQUENCE [LARGE SCALE GENOMIC DNA]</scope>
    <source>
        <strain>ATCC 14579 / DSM 31 / CCUG 7414 / JCM 2152 / NBRC 15305 / NCIMB 9373 / NCTC 2599 / NRRL B-3711</strain>
    </source>
</reference>
<comment type="function">
    <text evidence="1">Modulates transcription in response to changes in cellular NADH/NAD(+) redox state.</text>
</comment>
<comment type="subunit">
    <text evidence="1">Homodimer.</text>
</comment>
<comment type="subcellular location">
    <subcellularLocation>
        <location evidence="1">Cytoplasm</location>
    </subcellularLocation>
</comment>
<comment type="similarity">
    <text evidence="1">Belongs to the transcriptional regulatory Rex family.</text>
</comment>
<name>REX_BACCR</name>
<protein>
    <recommendedName>
        <fullName evidence="1">Redox-sensing transcriptional repressor Rex</fullName>
    </recommendedName>
</protein>
<evidence type="ECO:0000255" key="1">
    <source>
        <dbReference type="HAMAP-Rule" id="MF_01131"/>
    </source>
</evidence>
<keyword id="KW-0963">Cytoplasm</keyword>
<keyword id="KW-0238">DNA-binding</keyword>
<keyword id="KW-0520">NAD</keyword>
<keyword id="KW-1185">Reference proteome</keyword>
<keyword id="KW-0678">Repressor</keyword>
<keyword id="KW-0804">Transcription</keyword>
<keyword id="KW-0805">Transcription regulation</keyword>
<accession>Q81IS6</accession>
<sequence length="209" mass="23486">MDQQKIPQATAKRLPLYYRFIQNLSLSGKQRVSSAELSEAVKVDSATIRRDFSYFGALGKKGYGYNVNYLLSFFRETLDQDDITRVALIGVGNLGTAFLHYNFTKNNNTKIEMAFDVSEEKVGTEIGGIPVYHLDELEERLSNDIQVAILTVPATVAQAVADRLAETSVHGILNFTPARLNVSENIRIHHIDLAVELQTLVYFLKNYPQ</sequence>
<feature type="chain" id="PRO_0000097883" description="Redox-sensing transcriptional repressor Rex">
    <location>
        <begin position="1"/>
        <end position="209"/>
    </location>
</feature>
<feature type="DNA-binding region" description="H-T-H motif" evidence="1">
    <location>
        <begin position="16"/>
        <end position="55"/>
    </location>
</feature>
<feature type="binding site" evidence="1">
    <location>
        <begin position="90"/>
        <end position="95"/>
    </location>
    <ligand>
        <name>NAD(+)</name>
        <dbReference type="ChEBI" id="CHEBI:57540"/>
    </ligand>
</feature>
<gene>
    <name evidence="1" type="primary">rex</name>
    <name type="ordered locus">BC_0291</name>
</gene>
<dbReference type="EMBL" id="AE016877">
    <property type="protein sequence ID" value="AAP07343.1"/>
    <property type="molecule type" value="Genomic_DNA"/>
</dbReference>
<dbReference type="RefSeq" id="NP_830142.1">
    <property type="nucleotide sequence ID" value="NC_004722.1"/>
</dbReference>
<dbReference type="RefSeq" id="WP_000372699.1">
    <property type="nucleotide sequence ID" value="NZ_CP138336.1"/>
</dbReference>
<dbReference type="SMR" id="Q81IS6"/>
<dbReference type="STRING" id="226900.BC_0291"/>
<dbReference type="KEGG" id="bce:BC0291"/>
<dbReference type="PATRIC" id="fig|226900.8.peg.275"/>
<dbReference type="HOGENOM" id="CLU_061534_1_1_9"/>
<dbReference type="OrthoDB" id="9784760at2"/>
<dbReference type="Proteomes" id="UP000001417">
    <property type="component" value="Chromosome"/>
</dbReference>
<dbReference type="GO" id="GO:0005737">
    <property type="term" value="C:cytoplasm"/>
    <property type="evidence" value="ECO:0007669"/>
    <property type="project" value="UniProtKB-SubCell"/>
</dbReference>
<dbReference type="GO" id="GO:0003677">
    <property type="term" value="F:DNA binding"/>
    <property type="evidence" value="ECO:0007669"/>
    <property type="project" value="UniProtKB-UniRule"/>
</dbReference>
<dbReference type="GO" id="GO:0003700">
    <property type="term" value="F:DNA-binding transcription factor activity"/>
    <property type="evidence" value="ECO:0007669"/>
    <property type="project" value="UniProtKB-UniRule"/>
</dbReference>
<dbReference type="GO" id="GO:0045892">
    <property type="term" value="P:negative regulation of DNA-templated transcription"/>
    <property type="evidence" value="ECO:0007669"/>
    <property type="project" value="InterPro"/>
</dbReference>
<dbReference type="GO" id="GO:0051775">
    <property type="term" value="P:response to redox state"/>
    <property type="evidence" value="ECO:0007669"/>
    <property type="project" value="InterPro"/>
</dbReference>
<dbReference type="Gene3D" id="3.40.50.720">
    <property type="entry name" value="NAD(P)-binding Rossmann-like Domain"/>
    <property type="match status" value="1"/>
</dbReference>
<dbReference type="Gene3D" id="1.10.10.10">
    <property type="entry name" value="Winged helix-like DNA-binding domain superfamily/Winged helix DNA-binding domain"/>
    <property type="match status" value="1"/>
</dbReference>
<dbReference type="HAMAP" id="MF_01131">
    <property type="entry name" value="Rex"/>
    <property type="match status" value="1"/>
</dbReference>
<dbReference type="InterPro" id="IPR003781">
    <property type="entry name" value="CoA-bd"/>
</dbReference>
<dbReference type="InterPro" id="IPR036291">
    <property type="entry name" value="NAD(P)-bd_dom_sf"/>
</dbReference>
<dbReference type="InterPro" id="IPR009718">
    <property type="entry name" value="Rex_DNA-bd_C_dom"/>
</dbReference>
<dbReference type="InterPro" id="IPR022876">
    <property type="entry name" value="Tscrpt_rep_Rex"/>
</dbReference>
<dbReference type="InterPro" id="IPR036388">
    <property type="entry name" value="WH-like_DNA-bd_sf"/>
</dbReference>
<dbReference type="InterPro" id="IPR036390">
    <property type="entry name" value="WH_DNA-bd_sf"/>
</dbReference>
<dbReference type="NCBIfam" id="NF003989">
    <property type="entry name" value="PRK05472.1-3"/>
    <property type="match status" value="1"/>
</dbReference>
<dbReference type="NCBIfam" id="NF003991">
    <property type="entry name" value="PRK05472.1-5"/>
    <property type="match status" value="1"/>
</dbReference>
<dbReference type="NCBIfam" id="NF003994">
    <property type="entry name" value="PRK05472.2-3"/>
    <property type="match status" value="1"/>
</dbReference>
<dbReference type="NCBIfam" id="NF003995">
    <property type="entry name" value="PRK05472.2-4"/>
    <property type="match status" value="1"/>
</dbReference>
<dbReference type="NCBIfam" id="NF003996">
    <property type="entry name" value="PRK05472.2-5"/>
    <property type="match status" value="1"/>
</dbReference>
<dbReference type="PANTHER" id="PTHR35786">
    <property type="entry name" value="REDOX-SENSING TRANSCRIPTIONAL REPRESSOR REX"/>
    <property type="match status" value="1"/>
</dbReference>
<dbReference type="PANTHER" id="PTHR35786:SF1">
    <property type="entry name" value="REDOX-SENSING TRANSCRIPTIONAL REPRESSOR REX 1"/>
    <property type="match status" value="1"/>
</dbReference>
<dbReference type="Pfam" id="PF02629">
    <property type="entry name" value="CoA_binding"/>
    <property type="match status" value="1"/>
</dbReference>
<dbReference type="Pfam" id="PF06971">
    <property type="entry name" value="Put_DNA-bind_N"/>
    <property type="match status" value="1"/>
</dbReference>
<dbReference type="SMART" id="SM00881">
    <property type="entry name" value="CoA_binding"/>
    <property type="match status" value="1"/>
</dbReference>
<dbReference type="SUPFAM" id="SSF51735">
    <property type="entry name" value="NAD(P)-binding Rossmann-fold domains"/>
    <property type="match status" value="1"/>
</dbReference>
<dbReference type="SUPFAM" id="SSF46785">
    <property type="entry name" value="Winged helix' DNA-binding domain"/>
    <property type="match status" value="1"/>
</dbReference>